<feature type="chain" id="PRO_0000133017" description="Uncharacterized 14.9 kDa protein">
    <location>
        <begin position="1"/>
        <end position="130"/>
    </location>
</feature>
<protein>
    <recommendedName>
        <fullName>Uncharacterized 14.9 kDa protein</fullName>
    </recommendedName>
</protein>
<keyword id="KW-1185">Reference proteome</keyword>
<organism>
    <name type="scientific">Orgyia pseudotsugata multicapsid polyhedrosis virus</name>
    <name type="common">OpMNPV</name>
    <dbReference type="NCBI Taxonomy" id="262177"/>
    <lineage>
        <taxon>Viruses</taxon>
        <taxon>Viruses incertae sedis</taxon>
        <taxon>Naldaviricetes</taxon>
        <taxon>Lefavirales</taxon>
        <taxon>Baculoviridae</taxon>
        <taxon>Alphabaculovirus</taxon>
        <taxon>Alphabaculovirus orpseudotsugatae</taxon>
    </lineage>
</organism>
<gene>
    <name type="ORF">ORF78</name>
</gene>
<organismHost>
    <name type="scientific">Orgyia pseudotsugata</name>
    <name type="common">Douglas-fir tussock moth</name>
    <dbReference type="NCBI Taxonomy" id="33414"/>
</organismHost>
<proteinExistence type="predicted"/>
<reference key="1">
    <citation type="journal article" date="1997" name="Virology">
        <title>The sequence of the Orgyia pseudotsugata multinucleocapsid nuclear polyhedrosis virus genome.</title>
        <authorList>
            <person name="Ahrens C.H."/>
            <person name="Russell R.R."/>
            <person name="Funk C.J."/>
            <person name="Evans J."/>
            <person name="Harwood S."/>
            <person name="Rohrmann G.F."/>
        </authorList>
    </citation>
    <scope>NUCLEOTIDE SEQUENCE [LARGE SCALE GENOMIC DNA]</scope>
</reference>
<dbReference type="EMBL" id="U75930">
    <property type="protein sequence ID" value="AAC59077.1"/>
    <property type="molecule type" value="Genomic_DNA"/>
</dbReference>
<dbReference type="RefSeq" id="NP_046234.1">
    <property type="nucleotide sequence ID" value="NC_001875.2"/>
</dbReference>
<dbReference type="KEGG" id="vg:912110"/>
<dbReference type="OrthoDB" id="16738at10239"/>
<dbReference type="Proteomes" id="UP000009248">
    <property type="component" value="Genome"/>
</dbReference>
<dbReference type="InterPro" id="IPR010594">
    <property type="entry name" value="AcMNPV_Ac75"/>
</dbReference>
<dbReference type="Pfam" id="PF06648">
    <property type="entry name" value="AcMNPV_Ac75"/>
    <property type="match status" value="1"/>
</dbReference>
<accession>O10328</accession>
<name>Y075_NPVOP</name>
<sequence length="130" mass="14928">MAGGLRGFVAELKKSTEFVAKVIFVKARLSDWLNSQVYPDERFSAKWRGVLKMFVDGQLDEESVYCLVNTIDPSKLLTVGQINYLARAFRNNRKMMSITQKFVDGYRLSDDDISELSNYLVAQVEEVYQL</sequence>